<proteinExistence type="inferred from homology"/>
<gene>
    <name type="ordered locus">At2g17723</name>
    <name type="ORF">T17A5</name>
</gene>
<reference key="1">
    <citation type="journal article" date="1999" name="Nature">
        <title>Sequence and analysis of chromosome 2 of the plant Arabidopsis thaliana.</title>
        <authorList>
            <person name="Lin X."/>
            <person name="Kaul S."/>
            <person name="Rounsley S.D."/>
            <person name="Shea T.P."/>
            <person name="Benito M.-I."/>
            <person name="Town C.D."/>
            <person name="Fujii C.Y."/>
            <person name="Mason T.M."/>
            <person name="Bowman C.L."/>
            <person name="Barnstead M.E."/>
            <person name="Feldblyum T.V."/>
            <person name="Buell C.R."/>
            <person name="Ketchum K.A."/>
            <person name="Lee J.J."/>
            <person name="Ronning C.M."/>
            <person name="Koo H.L."/>
            <person name="Moffat K.S."/>
            <person name="Cronin L.A."/>
            <person name="Shen M."/>
            <person name="Pai G."/>
            <person name="Van Aken S."/>
            <person name="Umayam L."/>
            <person name="Tallon L.J."/>
            <person name="Gill J.E."/>
            <person name="Adams M.D."/>
            <person name="Carrera A.J."/>
            <person name="Creasy T.H."/>
            <person name="Goodman H.M."/>
            <person name="Somerville C.R."/>
            <person name="Copenhaver G.P."/>
            <person name="Preuss D."/>
            <person name="Nierman W.C."/>
            <person name="White O."/>
            <person name="Eisen J.A."/>
            <person name="Salzberg S.L."/>
            <person name="Fraser C.M."/>
            <person name="Venter J.C."/>
        </authorList>
    </citation>
    <scope>NUCLEOTIDE SEQUENCE [LARGE SCALE GENOMIC DNA]</scope>
    <source>
        <strain>cv. Columbia</strain>
    </source>
</reference>
<reference key="2">
    <citation type="journal article" date="2017" name="Plant J.">
        <title>Araport11: a complete reannotation of the Arabidopsis thaliana reference genome.</title>
        <authorList>
            <person name="Cheng C.Y."/>
            <person name="Krishnakumar V."/>
            <person name="Chan A.P."/>
            <person name="Thibaud-Nissen F."/>
            <person name="Schobel S."/>
            <person name="Town C.D."/>
        </authorList>
    </citation>
    <scope>GENOME REANNOTATION</scope>
    <source>
        <strain>cv. Columbia</strain>
    </source>
</reference>
<reference key="3">
    <citation type="journal article" date="2005" name="Plant Physiol.">
        <title>Genome organization of more than 300 defensin-like genes in Arabidopsis.</title>
        <authorList>
            <person name="Silverstein K.A.T."/>
            <person name="Graham M.A."/>
            <person name="Paape T.D."/>
            <person name="VandenBosch K.A."/>
        </authorList>
    </citation>
    <scope>GENE FAMILY</scope>
</reference>
<organism>
    <name type="scientific">Arabidopsis thaliana</name>
    <name type="common">Mouse-ear cress</name>
    <dbReference type="NCBI Taxonomy" id="3702"/>
    <lineage>
        <taxon>Eukaryota</taxon>
        <taxon>Viridiplantae</taxon>
        <taxon>Streptophyta</taxon>
        <taxon>Embryophyta</taxon>
        <taxon>Tracheophyta</taxon>
        <taxon>Spermatophyta</taxon>
        <taxon>Magnoliopsida</taxon>
        <taxon>eudicotyledons</taxon>
        <taxon>Gunneridae</taxon>
        <taxon>Pentapetalae</taxon>
        <taxon>rosids</taxon>
        <taxon>malvids</taxon>
        <taxon>Brassicales</taxon>
        <taxon>Brassicaceae</taxon>
        <taxon>Camelineae</taxon>
        <taxon>Arabidopsis</taxon>
    </lineage>
</organism>
<comment type="subcellular location">
    <subcellularLocation>
        <location evidence="1">Secreted</location>
    </subcellularLocation>
</comment>
<comment type="similarity">
    <text evidence="3">Belongs to the DEFL family.</text>
</comment>
<comment type="caution">
    <text evidence="3">Lacks 1 of the 4 disulfide bonds, which are conserved features of the family.</text>
</comment>
<accession>Q2V483</accession>
<evidence type="ECO:0000250" key="1"/>
<evidence type="ECO:0000255" key="2"/>
<evidence type="ECO:0000305" key="3"/>
<sequence length="88" mass="10085">MKSSIFFKLLLLVSLLVVIFRQSYAVADYCNRDADCKRVCLRPYACNLTRHLCMCHPNDVSSSKQHCIPEHKGFGEGGPPPQRLKLYR</sequence>
<dbReference type="EMBL" id="CP002685">
    <property type="protein sequence ID" value="AEC06674.1"/>
    <property type="molecule type" value="Genomic_DNA"/>
</dbReference>
<dbReference type="RefSeq" id="NP_001031365.1">
    <property type="nucleotide sequence ID" value="NM_001036288.1"/>
</dbReference>
<dbReference type="PaxDb" id="3702-AT2G17723.1"/>
<dbReference type="EnsemblPlants" id="AT2G17723.1">
    <property type="protein sequence ID" value="AT2G17723.1"/>
    <property type="gene ID" value="AT2G17723"/>
</dbReference>
<dbReference type="GeneID" id="3768444"/>
<dbReference type="Gramene" id="AT2G17723.1">
    <property type="protein sequence ID" value="AT2G17723.1"/>
    <property type="gene ID" value="AT2G17723"/>
</dbReference>
<dbReference type="KEGG" id="ath:AT2G17723"/>
<dbReference type="Araport" id="AT2G17723"/>
<dbReference type="TAIR" id="AT2G17723"/>
<dbReference type="HOGENOM" id="CLU_2430079_0_0_1"/>
<dbReference type="InParanoid" id="Q2V483"/>
<dbReference type="OMA" id="NRDADCK"/>
<dbReference type="PhylomeDB" id="Q2V483"/>
<dbReference type="PRO" id="PR:Q2V483"/>
<dbReference type="Proteomes" id="UP000006548">
    <property type="component" value="Chromosome 2"/>
</dbReference>
<dbReference type="ExpressionAtlas" id="Q2V483">
    <property type="expression patterns" value="baseline and differential"/>
</dbReference>
<dbReference type="GO" id="GO:0005576">
    <property type="term" value="C:extracellular region"/>
    <property type="evidence" value="ECO:0007669"/>
    <property type="project" value="UniProtKB-SubCell"/>
</dbReference>
<dbReference type="GO" id="GO:0050832">
    <property type="term" value="P:defense response to fungus"/>
    <property type="evidence" value="ECO:0007669"/>
    <property type="project" value="UniProtKB-KW"/>
</dbReference>
<dbReference type="GO" id="GO:0031640">
    <property type="term" value="P:killing of cells of another organism"/>
    <property type="evidence" value="ECO:0007669"/>
    <property type="project" value="UniProtKB-KW"/>
</dbReference>
<feature type="signal peptide" evidence="2">
    <location>
        <begin position="1"/>
        <end position="25"/>
    </location>
</feature>
<feature type="chain" id="PRO_0000379719" description="Putative defensin-like protein 256">
    <location>
        <begin position="26"/>
        <end position="88"/>
    </location>
</feature>
<feature type="disulfide bond" evidence="1">
    <location>
        <begin position="30"/>
        <end position="46"/>
    </location>
</feature>
<feature type="disulfide bond" evidence="1">
    <location>
        <begin position="36"/>
        <end position="53"/>
    </location>
</feature>
<feature type="disulfide bond" evidence="1">
    <location>
        <begin position="40"/>
        <end position="55"/>
    </location>
</feature>
<keyword id="KW-0929">Antimicrobial</keyword>
<keyword id="KW-1015">Disulfide bond</keyword>
<keyword id="KW-0295">Fungicide</keyword>
<keyword id="KW-0611">Plant defense</keyword>
<keyword id="KW-1185">Reference proteome</keyword>
<keyword id="KW-0964">Secreted</keyword>
<keyword id="KW-0732">Signal</keyword>
<protein>
    <recommendedName>
        <fullName>Putative defensin-like protein 256</fullName>
    </recommendedName>
</protein>
<name>DF256_ARATH</name>